<protein>
    <recommendedName>
        <fullName evidence="1">4-dimethylallyltryptophan N-methyltransferase easF</fullName>
        <ecNumber evidence="1">2.1.1.261</ecNumber>
    </recommendedName>
    <alternativeName>
        <fullName evidence="1">4-dimethylallyltryptophan methyltransferase</fullName>
    </alternativeName>
    <alternativeName>
        <fullName evidence="5">Ergot alkaloid synthesis protein F</fullName>
    </alternativeName>
</protein>
<organism>
    <name type="scientific">Epichloe festucae var. lolii</name>
    <name type="common">Neotyphodium lolii</name>
    <name type="synonym">Acremonium lolii</name>
    <dbReference type="NCBI Taxonomy" id="73839"/>
    <lineage>
        <taxon>Eukaryota</taxon>
        <taxon>Fungi</taxon>
        <taxon>Dikarya</taxon>
        <taxon>Ascomycota</taxon>
        <taxon>Pezizomycotina</taxon>
        <taxon>Sordariomycetes</taxon>
        <taxon>Hypocreomycetidae</taxon>
        <taxon>Hypocreales</taxon>
        <taxon>Clavicipitaceae</taxon>
        <taxon>Epichloe</taxon>
    </lineage>
</organism>
<proteinExistence type="evidence at transcript level"/>
<keyword id="KW-0017">Alkaloid metabolism</keyword>
<keyword id="KW-0489">Methyltransferase</keyword>
<keyword id="KW-0949">S-adenosyl-L-methionine</keyword>
<keyword id="KW-0808">Transferase</keyword>
<name>EASF_EPIFI</name>
<gene>
    <name evidence="5" type="primary">easF</name>
</gene>
<feature type="chain" id="PRO_0000439142" description="4-dimethylallyltryptophan N-methyltransferase easF">
    <location>
        <begin position="1"/>
        <end position="344"/>
    </location>
</feature>
<dbReference type="EC" id="2.1.1.261" evidence="1"/>
<dbReference type="EMBL" id="EF125025">
    <property type="protein sequence ID" value="ABM91451.1"/>
    <property type="molecule type" value="Genomic_DNA"/>
</dbReference>
<dbReference type="SMR" id="A2TBU2"/>
<dbReference type="UniPathway" id="UPA00327"/>
<dbReference type="GO" id="GO:0008168">
    <property type="term" value="F:methyltransferase activity"/>
    <property type="evidence" value="ECO:0007669"/>
    <property type="project" value="UniProtKB-KW"/>
</dbReference>
<dbReference type="GO" id="GO:0035835">
    <property type="term" value="P:indole alkaloid biosynthetic process"/>
    <property type="evidence" value="ECO:0007669"/>
    <property type="project" value="UniProtKB-UniPathway"/>
</dbReference>
<dbReference type="GO" id="GO:0032259">
    <property type="term" value="P:methylation"/>
    <property type="evidence" value="ECO:0007669"/>
    <property type="project" value="UniProtKB-KW"/>
</dbReference>
<dbReference type="Gene3D" id="3.40.50.150">
    <property type="entry name" value="Vaccinia Virus protein VP39"/>
    <property type="match status" value="1"/>
</dbReference>
<dbReference type="InterPro" id="IPR051128">
    <property type="entry name" value="EgtD_Methyltrsf_superfamily"/>
</dbReference>
<dbReference type="InterPro" id="IPR019257">
    <property type="entry name" value="MeTrfase_dom"/>
</dbReference>
<dbReference type="InterPro" id="IPR017804">
    <property type="entry name" value="MeTrfase_EgtD-like"/>
</dbReference>
<dbReference type="InterPro" id="IPR029063">
    <property type="entry name" value="SAM-dependent_MTases_sf"/>
</dbReference>
<dbReference type="InterPro" id="IPR017805">
    <property type="entry name" value="SAM_MeTrfase_EasF-type_put"/>
</dbReference>
<dbReference type="NCBIfam" id="TIGR03439">
    <property type="entry name" value="methyl_EasF"/>
    <property type="match status" value="1"/>
</dbReference>
<dbReference type="PANTHER" id="PTHR43397">
    <property type="entry name" value="ERGOTHIONEINE BIOSYNTHESIS PROTEIN 1"/>
    <property type="match status" value="1"/>
</dbReference>
<dbReference type="PANTHER" id="PTHR43397:SF1">
    <property type="entry name" value="ERGOTHIONEINE BIOSYNTHESIS PROTEIN 1"/>
    <property type="match status" value="1"/>
</dbReference>
<dbReference type="Pfam" id="PF10017">
    <property type="entry name" value="Methyltransf_33"/>
    <property type="match status" value="1"/>
</dbReference>
<dbReference type="PIRSF" id="PIRSF018005">
    <property type="entry name" value="UCP018005"/>
    <property type="match status" value="1"/>
</dbReference>
<evidence type="ECO:0000250" key="1">
    <source>
        <dbReference type="UniProtKB" id="B6D5I7"/>
    </source>
</evidence>
<evidence type="ECO:0000250" key="2">
    <source>
        <dbReference type="UniProtKB" id="Q50EL0"/>
    </source>
</evidence>
<evidence type="ECO:0000269" key="3">
    <source>
    </source>
</evidence>
<evidence type="ECO:0000269" key="4">
    <source>
    </source>
</evidence>
<evidence type="ECO:0000303" key="5">
    <source>
    </source>
</evidence>
<evidence type="ECO:0000305" key="6"/>
<evidence type="ECO:0000305" key="7">
    <source>
    </source>
</evidence>
<accession>A2TBU2</accession>
<reference key="1">
    <citation type="journal article" date="2007" name="Appl. Environ. Microbiol.">
        <title>A complex ergovaline gene cluster in epichloe endophytes of grasses.</title>
        <authorList>
            <person name="Fleetwood D.J."/>
            <person name="Scott B."/>
            <person name="Lane G.A."/>
            <person name="Tanaka A."/>
            <person name="Johnson R.D."/>
        </authorList>
    </citation>
    <scope>NUCLEOTIDE SEQUENCE [GENOMIC DNA]</scope>
    <scope>FUNCTION</scope>
    <scope>INDUCTION</scope>
    <source>
        <strain>Lp19</strain>
    </source>
</reference>
<reference key="2">
    <citation type="journal article" date="2001" name="Proc. Natl. Acad. Sci. U.S.A.">
        <title>Elimination of ergovaline from a grass-Neotyphodium endophyte symbiosis by genetic modification of the endophyte.</title>
        <authorList>
            <person name="Panaccione D.G."/>
            <person name="Johnson R.D."/>
            <person name="Wang J."/>
            <person name="Young C.A."/>
            <person name="Damrongkool P."/>
            <person name="Scott B."/>
            <person name="Schardl C.L."/>
        </authorList>
    </citation>
    <scope>FUNCTION</scope>
</reference>
<comment type="function">
    <text evidence="2 3 4">4-dimethylallyltryptophan N-methyltransferase; part of the gene cluster that mediates the biosynthesis of fungal ergot alkaloid ergovaline, the predominant ergopeptine product in E.festucae var. lolii (PubMed:17308187). DmaW catalyzes the first step of ergot alkaloid biosynthesis by condensing dimethylallyl diphosphate (DMAP) and tryptophan to form 4-dimethylallyl-L-tryptophan (By similarity). The second step is catalyzed by the methyltransferase easF that methylates 4-dimethylallyl-L-tryptophan in the presence of S-adenosyl-L-methionine, resulting in the formation of 4-dimethylallyl-L-abrine (By similarity). The catalase easC and the FAD-dependent oxidoreductase easE then transform 4-dimethylallyl-L-abrine to chanoclavine-I which is further oxidized by easD in the presence of NAD(+), resulting in the formation of chanoclavine-I aldehyde (By similarity). Agroclavine dehydrogenase easG then mediates the conversion of chanoclavine-I aldehyde to agroclavine via a non-enzymatic adduct reaction: the substrate is an iminium intermediate that is formed spontaneously from chanoclavine-I aldehyde in the presence of glutathione (By similarity). The presence of easA is not required to complete this reaction (By similarity). Further conversion of agroclavine to paspalic acid is a two-step process involving oxidation of agroclavine to elymoclavine and of elymoclavine to paspalic acid, the second step being performed by the elymoclavine oxidase cloA (By similarity). Paspalic acid is then further converted to D-lysergic acid (By similarity). Ergovaline is assembled from D-lysergic acid and three different amino acids by the D-lysergyl-peptide-synthetase composed of a monomudular (lpsB) and a trimodular (lpsA) nonribosomal peptide synthetase subunit (PubMed:11592979, PubMed:17308187).</text>
</comment>
<comment type="catalytic activity">
    <reaction evidence="1">
        <text>4-(3-methylbut-2-enyl)-L-tryptophan + S-adenosyl-L-methionine = 4-(3-methylbut-2-enyl)-L-abrine + S-adenosyl-L-homocysteine + H(+)</text>
        <dbReference type="Rhea" id="RHEA:34435"/>
        <dbReference type="ChEBI" id="CHEBI:15378"/>
        <dbReference type="ChEBI" id="CHEBI:57856"/>
        <dbReference type="ChEBI" id="CHEBI:58209"/>
        <dbReference type="ChEBI" id="CHEBI:59789"/>
        <dbReference type="ChEBI" id="CHEBI:67248"/>
        <dbReference type="EC" id="2.1.1.261"/>
    </reaction>
</comment>
<comment type="pathway">
    <text evidence="7">Alkaloid biosynthesis; ergot alkaloid biosynthesis.</text>
</comment>
<comment type="subunit">
    <text evidence="1">Homodimer.</text>
</comment>
<comment type="induction">
    <text evidence="4">Strongly expressed in planta but not expressed in axenic culture (PubMed:17308187).</text>
</comment>
<comment type="similarity">
    <text evidence="6">Belongs to the methyltransferase superfamily.</text>
</comment>
<sequence>MSKPNVLDIRLATFEDSIVDLVINGLRKQPKTLPALLFYANEGLKHWNHHSHQPEFYPRHQEVQILKKKAQEMAASIPMNSVVVDLGSASLDKVIHLLEALEVQKKNISYYALDVSASQLESTLAAIPTQNFRHVRFAGLHGTFDDGLHWLKEAPEARDVPHTVLLFGLTIGNFSRPNAAAFLSNIGQHAFQGKSGDQCSILMSLDSCKVPTQVLRAYTCEGVVPFALQSLTYANGLFSEKNKTQASGDVQHKVFNLDEWYYLSEWNFVLGRHEASLIPRSKDIKLLPPLDGILVSKDEKVRFGCSYKYDQEERMELFAAAGVKNEVTWSDEGCDVAFYQLKLS</sequence>